<keyword id="KW-0049">Antioxidant</keyword>
<keyword id="KW-0963">Cytoplasm</keyword>
<keyword id="KW-1015">Disulfide bond</keyword>
<keyword id="KW-0560">Oxidoreductase</keyword>
<keyword id="KW-0575">Peroxidase</keyword>
<keyword id="KW-0676">Redox-active center</keyword>
<evidence type="ECO:0000255" key="1">
    <source>
        <dbReference type="HAMAP-Rule" id="MF_00401"/>
    </source>
</evidence>
<gene>
    <name type="ordered locus">MM_0814</name>
</gene>
<proteinExistence type="inferred from homology"/>
<accession>Q8PYP6</accession>
<protein>
    <recommendedName>
        <fullName evidence="1">Peroxiredoxin</fullName>
        <ecNumber evidence="1">1.11.1.24</ecNumber>
    </recommendedName>
    <alternativeName>
        <fullName evidence="1">Thioredoxin peroxidase</fullName>
    </alternativeName>
    <alternativeName>
        <fullName evidence="1">Thioredoxin-dependent peroxiredoxin</fullName>
    </alternativeName>
</protein>
<name>TDXH_METMA</name>
<dbReference type="EC" id="1.11.1.24" evidence="1"/>
<dbReference type="EMBL" id="AE008384">
    <property type="protein sequence ID" value="AAM30510.1"/>
    <property type="molecule type" value="Genomic_DNA"/>
</dbReference>
<dbReference type="SMR" id="Q8PYP6"/>
<dbReference type="KEGG" id="mma:MM_0814"/>
<dbReference type="PATRIC" id="fig|192952.21.peg.966"/>
<dbReference type="eggNOG" id="arCOG00312">
    <property type="taxonomic scope" value="Archaea"/>
</dbReference>
<dbReference type="HOGENOM" id="CLU_042529_4_4_2"/>
<dbReference type="Proteomes" id="UP000000595">
    <property type="component" value="Chromosome"/>
</dbReference>
<dbReference type="GO" id="GO:0005829">
    <property type="term" value="C:cytosol"/>
    <property type="evidence" value="ECO:0007669"/>
    <property type="project" value="TreeGrafter"/>
</dbReference>
<dbReference type="GO" id="GO:0008379">
    <property type="term" value="F:thioredoxin peroxidase activity"/>
    <property type="evidence" value="ECO:0007669"/>
    <property type="project" value="TreeGrafter"/>
</dbReference>
<dbReference type="GO" id="GO:0045454">
    <property type="term" value="P:cell redox homeostasis"/>
    <property type="evidence" value="ECO:0007669"/>
    <property type="project" value="TreeGrafter"/>
</dbReference>
<dbReference type="GO" id="GO:0033554">
    <property type="term" value="P:cellular response to stress"/>
    <property type="evidence" value="ECO:0007669"/>
    <property type="project" value="TreeGrafter"/>
</dbReference>
<dbReference type="GO" id="GO:0042744">
    <property type="term" value="P:hydrogen peroxide catabolic process"/>
    <property type="evidence" value="ECO:0007669"/>
    <property type="project" value="TreeGrafter"/>
</dbReference>
<dbReference type="GO" id="GO:0006979">
    <property type="term" value="P:response to oxidative stress"/>
    <property type="evidence" value="ECO:0007669"/>
    <property type="project" value="TreeGrafter"/>
</dbReference>
<dbReference type="CDD" id="cd03016">
    <property type="entry name" value="PRX_1cys"/>
    <property type="match status" value="1"/>
</dbReference>
<dbReference type="FunFam" id="3.40.30.10:FF:000011">
    <property type="entry name" value="Peroxiredoxin PRX1"/>
    <property type="match status" value="1"/>
</dbReference>
<dbReference type="Gene3D" id="3.30.1020.10">
    <property type="entry name" value="Antioxidant, Horf6, Chain A, domain2"/>
    <property type="match status" value="1"/>
</dbReference>
<dbReference type="Gene3D" id="3.40.30.10">
    <property type="entry name" value="Glutaredoxin"/>
    <property type="match status" value="1"/>
</dbReference>
<dbReference type="HAMAP" id="MF_00401">
    <property type="entry name" value="Peroxiredoxin"/>
    <property type="match status" value="1"/>
</dbReference>
<dbReference type="InterPro" id="IPR000866">
    <property type="entry name" value="AhpC/TSA"/>
</dbReference>
<dbReference type="InterPro" id="IPR050217">
    <property type="entry name" value="Peroxiredoxin"/>
</dbReference>
<dbReference type="InterPro" id="IPR024706">
    <property type="entry name" value="Peroxiredoxin_AhpC-typ"/>
</dbReference>
<dbReference type="InterPro" id="IPR019479">
    <property type="entry name" value="Peroxiredoxin_C"/>
</dbReference>
<dbReference type="InterPro" id="IPR022915">
    <property type="entry name" value="Peroxiredoxin_TDXH"/>
</dbReference>
<dbReference type="InterPro" id="IPR045020">
    <property type="entry name" value="PRX_1cys"/>
</dbReference>
<dbReference type="InterPro" id="IPR036249">
    <property type="entry name" value="Thioredoxin-like_sf"/>
</dbReference>
<dbReference type="InterPro" id="IPR013766">
    <property type="entry name" value="Thioredoxin_domain"/>
</dbReference>
<dbReference type="NCBIfam" id="NF009668">
    <property type="entry name" value="PRK13189.1"/>
    <property type="match status" value="1"/>
</dbReference>
<dbReference type="PANTHER" id="PTHR10681:SF121">
    <property type="entry name" value="ALKYL HYDROPEROXIDE REDUCTASE C"/>
    <property type="match status" value="1"/>
</dbReference>
<dbReference type="PANTHER" id="PTHR10681">
    <property type="entry name" value="THIOREDOXIN PEROXIDASE"/>
    <property type="match status" value="1"/>
</dbReference>
<dbReference type="Pfam" id="PF10417">
    <property type="entry name" value="1-cysPrx_C"/>
    <property type="match status" value="1"/>
</dbReference>
<dbReference type="Pfam" id="PF00578">
    <property type="entry name" value="AhpC-TSA"/>
    <property type="match status" value="1"/>
</dbReference>
<dbReference type="PIRSF" id="PIRSF000239">
    <property type="entry name" value="AHPC"/>
    <property type="match status" value="1"/>
</dbReference>
<dbReference type="SUPFAM" id="SSF52833">
    <property type="entry name" value="Thioredoxin-like"/>
    <property type="match status" value="1"/>
</dbReference>
<dbReference type="PROSITE" id="PS51352">
    <property type="entry name" value="THIOREDOXIN_2"/>
    <property type="match status" value="1"/>
</dbReference>
<reference key="1">
    <citation type="journal article" date="2002" name="J. Mol. Microbiol. Biotechnol.">
        <title>The genome of Methanosarcina mazei: evidence for lateral gene transfer between Bacteria and Archaea.</title>
        <authorList>
            <person name="Deppenmeier U."/>
            <person name="Johann A."/>
            <person name="Hartsch T."/>
            <person name="Merkl R."/>
            <person name="Schmitz R.A."/>
            <person name="Martinez-Arias R."/>
            <person name="Henne A."/>
            <person name="Wiezer A."/>
            <person name="Baeumer S."/>
            <person name="Jacobi C."/>
            <person name="Brueggemann H."/>
            <person name="Lienard T."/>
            <person name="Christmann A."/>
            <person name="Boemecke M."/>
            <person name="Steckel S."/>
            <person name="Bhattacharyya A."/>
            <person name="Lykidis A."/>
            <person name="Overbeek R."/>
            <person name="Klenk H.-P."/>
            <person name="Gunsalus R.P."/>
            <person name="Fritz H.-J."/>
            <person name="Gottschalk G."/>
        </authorList>
    </citation>
    <scope>NUCLEOTIDE SEQUENCE [LARGE SCALE GENOMIC DNA]</scope>
    <source>
        <strain>ATCC BAA-159 / DSM 3647 / Goe1 / Go1 / JCM 11833 / OCM 88</strain>
    </source>
</reference>
<organism>
    <name type="scientific">Methanosarcina mazei (strain ATCC BAA-159 / DSM 3647 / Goe1 / Go1 / JCM 11833 / OCM 88)</name>
    <name type="common">Methanosarcina frisia</name>
    <dbReference type="NCBI Taxonomy" id="192952"/>
    <lineage>
        <taxon>Archaea</taxon>
        <taxon>Methanobacteriati</taxon>
        <taxon>Methanobacteriota</taxon>
        <taxon>Stenosarchaea group</taxon>
        <taxon>Methanomicrobia</taxon>
        <taxon>Methanosarcinales</taxon>
        <taxon>Methanosarcinaceae</taxon>
        <taxon>Methanosarcina</taxon>
    </lineage>
</organism>
<feature type="chain" id="PRO_0000135156" description="Peroxiredoxin">
    <location>
        <begin position="1"/>
        <end position="219"/>
    </location>
</feature>
<feature type="domain" description="Thioredoxin" evidence="1">
    <location>
        <begin position="2"/>
        <end position="164"/>
    </location>
</feature>
<feature type="active site" description="Cysteine sulfenic acid (-SOH) intermediate" evidence="1">
    <location>
        <position position="44"/>
    </location>
</feature>
<feature type="binding site" evidence="1">
    <location>
        <position position="127"/>
    </location>
    <ligand>
        <name>substrate</name>
    </ligand>
</feature>
<feature type="disulfide bond" description="Interchain (with C-212); in linked form" evidence="1">
    <location>
        <position position="44"/>
    </location>
</feature>
<feature type="disulfide bond" description="Alternate" evidence="1">
    <location>
        <begin position="206"/>
        <end position="212"/>
    </location>
</feature>
<feature type="disulfide bond" description="Interchain (with C-44); in linked form" evidence="1">
    <location>
        <position position="212"/>
    </location>
</feature>
<comment type="function">
    <text evidence="1">Thiol-specific peroxidase that catalyzes the reduction of hydrogen peroxide and organic hydroperoxides to water and alcohols, respectively. Plays a role in cell protection against oxidative stress by detoxifying peroxides.</text>
</comment>
<comment type="catalytic activity">
    <reaction evidence="1">
        <text>a hydroperoxide + [thioredoxin]-dithiol = an alcohol + [thioredoxin]-disulfide + H2O</text>
        <dbReference type="Rhea" id="RHEA:62620"/>
        <dbReference type="Rhea" id="RHEA-COMP:10698"/>
        <dbReference type="Rhea" id="RHEA-COMP:10700"/>
        <dbReference type="ChEBI" id="CHEBI:15377"/>
        <dbReference type="ChEBI" id="CHEBI:29950"/>
        <dbReference type="ChEBI" id="CHEBI:30879"/>
        <dbReference type="ChEBI" id="CHEBI:35924"/>
        <dbReference type="ChEBI" id="CHEBI:50058"/>
        <dbReference type="EC" id="1.11.1.24"/>
    </reaction>
</comment>
<comment type="subunit">
    <text evidence="1">Homodecamer. Pentamer of dimers that assemble into a ring structure.</text>
</comment>
<comment type="subcellular location">
    <subcellularLocation>
        <location evidence="1">Cytoplasm</location>
    </subcellularLocation>
</comment>
<comment type="miscellaneous">
    <text evidence="1">The active site is a conserved redox-active cysteine residue, the peroxidatic cysteine (C(P)), which makes the nucleophilic attack on the peroxide substrate. The peroxide oxidizes the C(P)-SH to cysteine sulfenic acid (C(P)-SOH), which then reacts with another cysteine residue, the resolving cysteine (C(R)), to form a disulfide bridge. The disulfide is subsequently reduced by an appropriate electron donor to complete the catalytic cycle. Although the primary sequence of this enzyme is similar to those of the 1-Cys Prx6 enzymes, its catalytic properties resemble those of the typical 2-Cys Prxs and C(R) is provided by the other dimeric subunit to form an intersubunit disulfide. The disulfide is subsequently reduced by thioredoxin.</text>
</comment>
<comment type="similarity">
    <text evidence="1">Belongs to the peroxiredoxin family. Prx6 subfamily.</text>
</comment>
<sequence>MPLIGDDAPSFTAVTTQGIIKFPDDYKGKWVILFSHPADFTPVCTTEFMTFASMQEEFRSMNTELIGLSIDSVFSHIAWLKRIEEKIEYKGMKNLEIKFPVIEDLKMDVAKKYGMVQPKASTTQAVRAVFIIDPEAKIRTILYYPQSTGRNMQEIKRIVVALQKNAAEKVATPANWQPGEDVIIPPPSSMEAVKERMGKEEEGKRCLDWFMCLKKDTQK</sequence>